<name>FXL22_MOUSE</name>
<protein>
    <recommendedName>
        <fullName>F-box and leucine-rich protein 22</fullName>
    </recommendedName>
</protein>
<evidence type="ECO:0000250" key="1"/>
<evidence type="ECO:0000269" key="2">
    <source>
    </source>
</evidence>
<sequence length="236" mass="26320">MHITQLNRECLLCLFSFLDKDSRRSLSRTCSQLRDVFEDPTLWPLLHFHSLAELKKDNFRLSPALRSLSICWHSSRVQVCSIEDWLKSALQRSICSQHESLVNDFLLQVCNRCPNLTSVTLSGCGHVTDDCLARLLLSCPRLRTLRLENCARVTNRTLAAVAAHGRALQTLHVDFCRNVSAAGLLRLRAACPNLRLSAERSAAMIPDQPPRARVCAASAFSAAPGRQSMPHPTGSY</sequence>
<keyword id="KW-0963">Cytoplasm</keyword>
<keyword id="KW-0433">Leucine-rich repeat</keyword>
<keyword id="KW-1185">Reference proteome</keyword>
<keyword id="KW-0677">Repeat</keyword>
<keyword id="KW-0833">Ubl conjugation pathway</keyword>
<feature type="chain" id="PRO_0000247150" description="F-box and leucine-rich protein 22">
    <location>
        <begin position="1"/>
        <end position="236"/>
    </location>
</feature>
<feature type="domain" description="F-box">
    <location>
        <begin position="1"/>
        <end position="46"/>
    </location>
</feature>
<feature type="repeat" description="LRR 1">
    <location>
        <begin position="15"/>
        <end position="40"/>
    </location>
</feature>
<feature type="repeat" description="LRR 2">
    <location>
        <begin position="43"/>
        <end position="72"/>
    </location>
</feature>
<feature type="repeat" description="LRR 3">
    <location>
        <begin position="98"/>
        <end position="123"/>
    </location>
</feature>
<feature type="repeat" description="LRR 4">
    <location>
        <begin position="124"/>
        <end position="149"/>
    </location>
</feature>
<feature type="repeat" description="LRR 5">
    <location>
        <begin position="150"/>
        <end position="175"/>
    </location>
</feature>
<feature type="repeat" description="LRR 6">
    <location>
        <begin position="176"/>
        <end position="201"/>
    </location>
</feature>
<dbReference type="EMBL" id="AK052175">
    <property type="protein sequence ID" value="BAC34870.1"/>
    <property type="molecule type" value="mRNA"/>
</dbReference>
<dbReference type="EMBL" id="AK084845">
    <property type="protein sequence ID" value="BAC39291.1"/>
    <property type="molecule type" value="mRNA"/>
</dbReference>
<dbReference type="EMBL" id="AK085980">
    <property type="protein sequence ID" value="BAC39583.1"/>
    <property type="molecule type" value="mRNA"/>
</dbReference>
<dbReference type="EMBL" id="BC100535">
    <property type="protein sequence ID" value="AAI00536.1"/>
    <property type="molecule type" value="mRNA"/>
</dbReference>
<dbReference type="CCDS" id="CCDS23304.1"/>
<dbReference type="RefSeq" id="NP_780415.1">
    <property type="nucleotide sequence ID" value="NM_175206.4"/>
</dbReference>
<dbReference type="RefSeq" id="XP_036011252.1">
    <property type="nucleotide sequence ID" value="XM_036155359.1"/>
</dbReference>
<dbReference type="SMR" id="Q8C7B6"/>
<dbReference type="FunCoup" id="Q8C7B6">
    <property type="interactions" value="41"/>
</dbReference>
<dbReference type="STRING" id="10090.ENSMUSP00000060137"/>
<dbReference type="PaxDb" id="10090-ENSMUSP00000060137"/>
<dbReference type="ProteomicsDB" id="267539"/>
<dbReference type="Antibodypedia" id="25713">
    <property type="antibodies" value="55 antibodies from 12 providers"/>
</dbReference>
<dbReference type="DNASU" id="74165"/>
<dbReference type="Ensembl" id="ENSMUST00000056890.10">
    <property type="protein sequence ID" value="ENSMUSP00000060137.8"/>
    <property type="gene ID" value="ENSMUSG00000050503.10"/>
</dbReference>
<dbReference type="GeneID" id="74165"/>
<dbReference type="KEGG" id="mmu:74165"/>
<dbReference type="UCSC" id="uc009qex.2">
    <property type="organism name" value="mouse"/>
</dbReference>
<dbReference type="AGR" id="MGI:1921415"/>
<dbReference type="CTD" id="283807"/>
<dbReference type="MGI" id="MGI:1921415">
    <property type="gene designation" value="Fbxl22"/>
</dbReference>
<dbReference type="VEuPathDB" id="HostDB:ENSMUSG00000050503"/>
<dbReference type="eggNOG" id="KOG1947">
    <property type="taxonomic scope" value="Eukaryota"/>
</dbReference>
<dbReference type="GeneTree" id="ENSGT00390000003748"/>
<dbReference type="HOGENOM" id="CLU_1239778_0_0_1"/>
<dbReference type="InParanoid" id="Q8C7B6"/>
<dbReference type="OMA" id="LQVCNIE"/>
<dbReference type="OrthoDB" id="549243at2759"/>
<dbReference type="PhylomeDB" id="Q8C7B6"/>
<dbReference type="TreeFam" id="TF332457"/>
<dbReference type="UniPathway" id="UPA00143"/>
<dbReference type="BioGRID-ORCS" id="74165">
    <property type="hits" value="1 hit in 77 CRISPR screens"/>
</dbReference>
<dbReference type="ChiTaRS" id="Fbxl22">
    <property type="organism name" value="mouse"/>
</dbReference>
<dbReference type="PRO" id="PR:Q8C7B6"/>
<dbReference type="Proteomes" id="UP000000589">
    <property type="component" value="Chromosome 9"/>
</dbReference>
<dbReference type="RNAct" id="Q8C7B6">
    <property type="molecule type" value="protein"/>
</dbReference>
<dbReference type="Bgee" id="ENSMUSG00000050503">
    <property type="expression patterns" value="Expressed in urinary bladder and 86 other cell types or tissues"/>
</dbReference>
<dbReference type="GO" id="GO:0005829">
    <property type="term" value="C:cytosol"/>
    <property type="evidence" value="ECO:0007669"/>
    <property type="project" value="Ensembl"/>
</dbReference>
<dbReference type="GO" id="GO:0005730">
    <property type="term" value="C:nucleolus"/>
    <property type="evidence" value="ECO:0007669"/>
    <property type="project" value="Ensembl"/>
</dbReference>
<dbReference type="GO" id="GO:0019005">
    <property type="term" value="C:SCF ubiquitin ligase complex"/>
    <property type="evidence" value="ECO:0000266"/>
    <property type="project" value="MGI"/>
</dbReference>
<dbReference type="GO" id="GO:0030018">
    <property type="term" value="C:Z disc"/>
    <property type="evidence" value="ECO:0000266"/>
    <property type="project" value="MGI"/>
</dbReference>
<dbReference type="GO" id="GO:0061630">
    <property type="term" value="F:ubiquitin protein ligase activity"/>
    <property type="evidence" value="ECO:0000266"/>
    <property type="project" value="MGI"/>
</dbReference>
<dbReference type="GO" id="GO:0043161">
    <property type="term" value="P:proteasome-mediated ubiquitin-dependent protein catabolic process"/>
    <property type="evidence" value="ECO:0000266"/>
    <property type="project" value="MGI"/>
</dbReference>
<dbReference type="GO" id="GO:0016567">
    <property type="term" value="P:protein ubiquitination"/>
    <property type="evidence" value="ECO:0007669"/>
    <property type="project" value="UniProtKB-UniPathway"/>
</dbReference>
<dbReference type="CDD" id="cd22129">
    <property type="entry name" value="F-box_FBXL22"/>
    <property type="match status" value="1"/>
</dbReference>
<dbReference type="FunFam" id="3.80.10.10:FF:000454">
    <property type="entry name" value="F-box and leucine-rich repeat protein 22"/>
    <property type="match status" value="1"/>
</dbReference>
<dbReference type="Gene3D" id="1.20.1280.50">
    <property type="match status" value="1"/>
</dbReference>
<dbReference type="Gene3D" id="3.80.10.10">
    <property type="entry name" value="Ribonuclease Inhibitor"/>
    <property type="match status" value="1"/>
</dbReference>
<dbReference type="InterPro" id="IPR036047">
    <property type="entry name" value="F-box-like_dom_sf"/>
</dbReference>
<dbReference type="InterPro" id="IPR001810">
    <property type="entry name" value="F-box_dom"/>
</dbReference>
<dbReference type="InterPro" id="IPR050648">
    <property type="entry name" value="F-box_LRR-repeat"/>
</dbReference>
<dbReference type="InterPro" id="IPR006553">
    <property type="entry name" value="Leu-rich_rpt_Cys-con_subtyp"/>
</dbReference>
<dbReference type="InterPro" id="IPR032675">
    <property type="entry name" value="LRR_dom_sf"/>
</dbReference>
<dbReference type="PANTHER" id="PTHR13382:SF46">
    <property type="entry name" value="LEUCINE-RICH REPEAT-CONTAINING PROTEIN"/>
    <property type="match status" value="1"/>
</dbReference>
<dbReference type="PANTHER" id="PTHR13382">
    <property type="entry name" value="MITOCHONDRIAL ATP SYNTHASE COUPLING FACTOR B"/>
    <property type="match status" value="1"/>
</dbReference>
<dbReference type="Pfam" id="PF12937">
    <property type="entry name" value="F-box-like"/>
    <property type="match status" value="1"/>
</dbReference>
<dbReference type="SMART" id="SM00367">
    <property type="entry name" value="LRR_CC"/>
    <property type="match status" value="3"/>
</dbReference>
<dbReference type="SUPFAM" id="SSF81383">
    <property type="entry name" value="F-box domain"/>
    <property type="match status" value="1"/>
</dbReference>
<dbReference type="SUPFAM" id="SSF52047">
    <property type="entry name" value="RNI-like"/>
    <property type="match status" value="1"/>
</dbReference>
<gene>
    <name type="primary">Fbxl22</name>
</gene>
<organism>
    <name type="scientific">Mus musculus</name>
    <name type="common">Mouse</name>
    <dbReference type="NCBI Taxonomy" id="10090"/>
    <lineage>
        <taxon>Eukaryota</taxon>
        <taxon>Metazoa</taxon>
        <taxon>Chordata</taxon>
        <taxon>Craniata</taxon>
        <taxon>Vertebrata</taxon>
        <taxon>Euteleostomi</taxon>
        <taxon>Mammalia</taxon>
        <taxon>Eutheria</taxon>
        <taxon>Euarchontoglires</taxon>
        <taxon>Glires</taxon>
        <taxon>Rodentia</taxon>
        <taxon>Myomorpha</taxon>
        <taxon>Muroidea</taxon>
        <taxon>Muridae</taxon>
        <taxon>Murinae</taxon>
        <taxon>Mus</taxon>
        <taxon>Mus</taxon>
    </lineage>
</organism>
<comment type="function">
    <text evidence="1">Substrate-recognition component of the SCF (SKP1-CUL1-F-box protein)-type E3 ubiquitin ligase complex. Promotes ubiquitination of sarcomeric proteins alpha-actinin-2 (ACTN2) and filamin-C (FLNC) (By similarity).</text>
</comment>
<comment type="pathway">
    <text>Protein modification; protein ubiquitination.</text>
</comment>
<comment type="subunit">
    <text>Directly interacts with SKP1 and CUL1.</text>
</comment>
<comment type="subcellular location">
    <subcellularLocation>
        <location evidence="2">Cytoplasm</location>
        <location evidence="2">Myofibril</location>
        <location evidence="2">Sarcomere</location>
        <location evidence="2">Z line</location>
    </subcellularLocation>
</comment>
<comment type="tissue specificity">
    <text evidence="2">Enriched in cardiac muscle (at protein level).</text>
</comment>
<reference key="1">
    <citation type="journal article" date="2005" name="Science">
        <title>The transcriptional landscape of the mammalian genome.</title>
        <authorList>
            <person name="Carninci P."/>
            <person name="Kasukawa T."/>
            <person name="Katayama S."/>
            <person name="Gough J."/>
            <person name="Frith M.C."/>
            <person name="Maeda N."/>
            <person name="Oyama R."/>
            <person name="Ravasi T."/>
            <person name="Lenhard B."/>
            <person name="Wells C."/>
            <person name="Kodzius R."/>
            <person name="Shimokawa K."/>
            <person name="Bajic V.B."/>
            <person name="Brenner S.E."/>
            <person name="Batalov S."/>
            <person name="Forrest A.R."/>
            <person name="Zavolan M."/>
            <person name="Davis M.J."/>
            <person name="Wilming L.G."/>
            <person name="Aidinis V."/>
            <person name="Allen J.E."/>
            <person name="Ambesi-Impiombato A."/>
            <person name="Apweiler R."/>
            <person name="Aturaliya R.N."/>
            <person name="Bailey T.L."/>
            <person name="Bansal M."/>
            <person name="Baxter L."/>
            <person name="Beisel K.W."/>
            <person name="Bersano T."/>
            <person name="Bono H."/>
            <person name="Chalk A.M."/>
            <person name="Chiu K.P."/>
            <person name="Choudhary V."/>
            <person name="Christoffels A."/>
            <person name="Clutterbuck D.R."/>
            <person name="Crowe M.L."/>
            <person name="Dalla E."/>
            <person name="Dalrymple B.P."/>
            <person name="de Bono B."/>
            <person name="Della Gatta G."/>
            <person name="di Bernardo D."/>
            <person name="Down T."/>
            <person name="Engstrom P."/>
            <person name="Fagiolini M."/>
            <person name="Faulkner G."/>
            <person name="Fletcher C.F."/>
            <person name="Fukushima T."/>
            <person name="Furuno M."/>
            <person name="Futaki S."/>
            <person name="Gariboldi M."/>
            <person name="Georgii-Hemming P."/>
            <person name="Gingeras T.R."/>
            <person name="Gojobori T."/>
            <person name="Green R.E."/>
            <person name="Gustincich S."/>
            <person name="Harbers M."/>
            <person name="Hayashi Y."/>
            <person name="Hensch T.K."/>
            <person name="Hirokawa N."/>
            <person name="Hill D."/>
            <person name="Huminiecki L."/>
            <person name="Iacono M."/>
            <person name="Ikeo K."/>
            <person name="Iwama A."/>
            <person name="Ishikawa T."/>
            <person name="Jakt M."/>
            <person name="Kanapin A."/>
            <person name="Katoh M."/>
            <person name="Kawasawa Y."/>
            <person name="Kelso J."/>
            <person name="Kitamura H."/>
            <person name="Kitano H."/>
            <person name="Kollias G."/>
            <person name="Krishnan S.P."/>
            <person name="Kruger A."/>
            <person name="Kummerfeld S.K."/>
            <person name="Kurochkin I.V."/>
            <person name="Lareau L.F."/>
            <person name="Lazarevic D."/>
            <person name="Lipovich L."/>
            <person name="Liu J."/>
            <person name="Liuni S."/>
            <person name="McWilliam S."/>
            <person name="Madan Babu M."/>
            <person name="Madera M."/>
            <person name="Marchionni L."/>
            <person name="Matsuda H."/>
            <person name="Matsuzawa S."/>
            <person name="Miki H."/>
            <person name="Mignone F."/>
            <person name="Miyake S."/>
            <person name="Morris K."/>
            <person name="Mottagui-Tabar S."/>
            <person name="Mulder N."/>
            <person name="Nakano N."/>
            <person name="Nakauchi H."/>
            <person name="Ng P."/>
            <person name="Nilsson R."/>
            <person name="Nishiguchi S."/>
            <person name="Nishikawa S."/>
            <person name="Nori F."/>
            <person name="Ohara O."/>
            <person name="Okazaki Y."/>
            <person name="Orlando V."/>
            <person name="Pang K.C."/>
            <person name="Pavan W.J."/>
            <person name="Pavesi G."/>
            <person name="Pesole G."/>
            <person name="Petrovsky N."/>
            <person name="Piazza S."/>
            <person name="Reed J."/>
            <person name="Reid J.F."/>
            <person name="Ring B.Z."/>
            <person name="Ringwald M."/>
            <person name="Rost B."/>
            <person name="Ruan Y."/>
            <person name="Salzberg S.L."/>
            <person name="Sandelin A."/>
            <person name="Schneider C."/>
            <person name="Schoenbach C."/>
            <person name="Sekiguchi K."/>
            <person name="Semple C.A."/>
            <person name="Seno S."/>
            <person name="Sessa L."/>
            <person name="Sheng Y."/>
            <person name="Shibata Y."/>
            <person name="Shimada H."/>
            <person name="Shimada K."/>
            <person name="Silva D."/>
            <person name="Sinclair B."/>
            <person name="Sperling S."/>
            <person name="Stupka E."/>
            <person name="Sugiura K."/>
            <person name="Sultana R."/>
            <person name="Takenaka Y."/>
            <person name="Taki K."/>
            <person name="Tammoja K."/>
            <person name="Tan S.L."/>
            <person name="Tang S."/>
            <person name="Taylor M.S."/>
            <person name="Tegner J."/>
            <person name="Teichmann S.A."/>
            <person name="Ueda H.R."/>
            <person name="van Nimwegen E."/>
            <person name="Verardo R."/>
            <person name="Wei C.L."/>
            <person name="Yagi K."/>
            <person name="Yamanishi H."/>
            <person name="Zabarovsky E."/>
            <person name="Zhu S."/>
            <person name="Zimmer A."/>
            <person name="Hide W."/>
            <person name="Bult C."/>
            <person name="Grimmond S.M."/>
            <person name="Teasdale R.D."/>
            <person name="Liu E.T."/>
            <person name="Brusic V."/>
            <person name="Quackenbush J."/>
            <person name="Wahlestedt C."/>
            <person name="Mattick J.S."/>
            <person name="Hume D.A."/>
            <person name="Kai C."/>
            <person name="Sasaki D."/>
            <person name="Tomaru Y."/>
            <person name="Fukuda S."/>
            <person name="Kanamori-Katayama M."/>
            <person name="Suzuki M."/>
            <person name="Aoki J."/>
            <person name="Arakawa T."/>
            <person name="Iida J."/>
            <person name="Imamura K."/>
            <person name="Itoh M."/>
            <person name="Kato T."/>
            <person name="Kawaji H."/>
            <person name="Kawagashira N."/>
            <person name="Kawashima T."/>
            <person name="Kojima M."/>
            <person name="Kondo S."/>
            <person name="Konno H."/>
            <person name="Nakano K."/>
            <person name="Ninomiya N."/>
            <person name="Nishio T."/>
            <person name="Okada M."/>
            <person name="Plessy C."/>
            <person name="Shibata K."/>
            <person name="Shiraki T."/>
            <person name="Suzuki S."/>
            <person name="Tagami M."/>
            <person name="Waki K."/>
            <person name="Watahiki A."/>
            <person name="Okamura-Oho Y."/>
            <person name="Suzuki H."/>
            <person name="Kawai J."/>
            <person name="Hayashizaki Y."/>
        </authorList>
    </citation>
    <scope>NUCLEOTIDE SEQUENCE [LARGE SCALE MRNA]</scope>
    <source>
        <strain>C57BL/6J</strain>
        <tissue>Heart</tissue>
    </source>
</reference>
<reference key="2">
    <citation type="journal article" date="2004" name="Genome Res.">
        <title>The status, quality, and expansion of the NIH full-length cDNA project: the Mammalian Gene Collection (MGC).</title>
        <authorList>
            <consortium name="The MGC Project Team"/>
        </authorList>
    </citation>
    <scope>NUCLEOTIDE SEQUENCE [LARGE SCALE MRNA]</scope>
    <source>
        <tissue>Jaw</tissue>
        <tissue>Limb</tissue>
    </source>
</reference>
<reference key="3">
    <citation type="journal article" date="2012" name="Circ. Res.">
        <title>F-box and leucine-rich repeat protein 22 is a cardiac-enriched F-box protein that regulates sarcomeric protein turnover and is essential for maintenance of contractile function in vivo.</title>
        <authorList>
            <person name="Spaich S."/>
            <person name="Will R.D."/>
            <person name="Just S."/>
            <person name="Spaich S."/>
            <person name="Kuhn C."/>
            <person name="Frank D."/>
            <person name="Berger I.M."/>
            <person name="Wiemann S."/>
            <person name="Korn B."/>
            <person name="Koegl M."/>
            <person name="Backs J."/>
            <person name="Katus H.A."/>
            <person name="Rottbauer W."/>
            <person name="Frey N."/>
        </authorList>
    </citation>
    <scope>SUBCELLULAR LOCATION</scope>
    <scope>TISSUE SPECIFICITY</scope>
</reference>
<proteinExistence type="evidence at protein level"/>
<accession>Q8C7B6</accession>
<accession>Q8C3G3</accession>
<accession>Q8C3V6</accession>